<reference key="1">
    <citation type="journal article" date="2011" name="J. Bacteriol.">
        <title>Complete genome sequence of the plant growth-promoting endophyte Burkholderia phytofirmans strain PsJN.</title>
        <authorList>
            <person name="Weilharter A."/>
            <person name="Mitter B."/>
            <person name="Shin M.V."/>
            <person name="Chain P.S."/>
            <person name="Nowak J."/>
            <person name="Sessitsch A."/>
        </authorList>
    </citation>
    <scope>NUCLEOTIDE SEQUENCE [LARGE SCALE GENOMIC DNA]</scope>
    <source>
        <strain>DSM 17436 / LMG 22146 / PsJN</strain>
    </source>
</reference>
<proteinExistence type="inferred from homology"/>
<gene>
    <name type="ordered locus">Bphyt_0500</name>
</gene>
<feature type="chain" id="PRO_1000131238" description="UPF0250 protein Bphyt_0500">
    <location>
        <begin position="1"/>
        <end position="89"/>
    </location>
</feature>
<comment type="similarity">
    <text evidence="1">Belongs to the UPF0250 family.</text>
</comment>
<organism>
    <name type="scientific">Paraburkholderia phytofirmans (strain DSM 17436 / LMG 22146 / PsJN)</name>
    <name type="common">Burkholderia phytofirmans</name>
    <dbReference type="NCBI Taxonomy" id="398527"/>
    <lineage>
        <taxon>Bacteria</taxon>
        <taxon>Pseudomonadati</taxon>
        <taxon>Pseudomonadota</taxon>
        <taxon>Betaproteobacteria</taxon>
        <taxon>Burkholderiales</taxon>
        <taxon>Burkholderiaceae</taxon>
        <taxon>Paraburkholderia</taxon>
    </lineage>
</organism>
<protein>
    <recommendedName>
        <fullName evidence="1">UPF0250 protein Bphyt_0500</fullName>
    </recommendedName>
</protein>
<dbReference type="EMBL" id="CP001052">
    <property type="protein sequence ID" value="ACD14925.1"/>
    <property type="molecule type" value="Genomic_DNA"/>
</dbReference>
<dbReference type="RefSeq" id="WP_012431567.1">
    <property type="nucleotide sequence ID" value="NC_010681.1"/>
</dbReference>
<dbReference type="SMR" id="B2SWY1"/>
<dbReference type="STRING" id="398527.Bphyt_0500"/>
<dbReference type="KEGG" id="bpy:Bphyt_0500"/>
<dbReference type="eggNOG" id="COG2921">
    <property type="taxonomic scope" value="Bacteria"/>
</dbReference>
<dbReference type="HOGENOM" id="CLU_161438_1_2_4"/>
<dbReference type="OrthoDB" id="9793424at2"/>
<dbReference type="Proteomes" id="UP000001739">
    <property type="component" value="Chromosome 1"/>
</dbReference>
<dbReference type="Gene3D" id="3.30.70.260">
    <property type="match status" value="1"/>
</dbReference>
<dbReference type="HAMAP" id="MF_00659">
    <property type="entry name" value="UPF0250"/>
    <property type="match status" value="1"/>
</dbReference>
<dbReference type="InterPro" id="IPR007454">
    <property type="entry name" value="UPF0250_YbeD-like"/>
</dbReference>
<dbReference type="InterPro" id="IPR027471">
    <property type="entry name" value="YbeD-like_sf"/>
</dbReference>
<dbReference type="NCBIfam" id="NF002533">
    <property type="entry name" value="PRK02047.1"/>
    <property type="match status" value="1"/>
</dbReference>
<dbReference type="PANTHER" id="PTHR38036">
    <property type="entry name" value="UPF0250 PROTEIN YBED"/>
    <property type="match status" value="1"/>
</dbReference>
<dbReference type="PANTHER" id="PTHR38036:SF1">
    <property type="entry name" value="UPF0250 PROTEIN YBED"/>
    <property type="match status" value="1"/>
</dbReference>
<dbReference type="Pfam" id="PF04359">
    <property type="entry name" value="DUF493"/>
    <property type="match status" value="1"/>
</dbReference>
<dbReference type="SUPFAM" id="SSF117991">
    <property type="entry name" value="YbeD/HP0495-like"/>
    <property type="match status" value="1"/>
</dbReference>
<accession>B2SWY1</accession>
<sequence length="89" mass="9920">MSSVNESLFEFPCDFPIKIMGKSHPEFAETIVTVVRQFDNEVDASRVETRPSSGGNYTGLTVTVRATSREQLDDIYRALTGHPMVKVVL</sequence>
<evidence type="ECO:0000255" key="1">
    <source>
        <dbReference type="HAMAP-Rule" id="MF_00659"/>
    </source>
</evidence>
<name>Y500_PARPJ</name>